<comment type="pathway">
    <text>Slime biogenesis; slime polysaccharide biosynthesis.</text>
</comment>
<comment type="similarity">
    <text evidence="1">Belongs to the transferase hexapeptide repeat family.</text>
</comment>
<proteinExistence type="inferred from homology"/>
<evidence type="ECO:0000305" key="1"/>
<keyword id="KW-0012">Acyltransferase</keyword>
<keyword id="KW-0448">Lipopolysaccharide biosynthesis</keyword>
<keyword id="KW-1185">Reference proteome</keyword>
<keyword id="KW-0677">Repeat</keyword>
<keyword id="KW-0808">Transferase</keyword>
<organism>
    <name type="scientific">Escherichia coli (strain K12)</name>
    <dbReference type="NCBI Taxonomy" id="83333"/>
    <lineage>
        <taxon>Bacteria</taxon>
        <taxon>Pseudomonadati</taxon>
        <taxon>Pseudomonadota</taxon>
        <taxon>Gammaproteobacteria</taxon>
        <taxon>Enterobacterales</taxon>
        <taxon>Enterobacteriaceae</taxon>
        <taxon>Escherichia</taxon>
    </lineage>
</organism>
<gene>
    <name type="primary">wcaF</name>
    <name type="ordered locus">b2054</name>
    <name type="ordered locus">JW2039</name>
</gene>
<protein>
    <recommendedName>
        <fullName>Putative colanic acid biosynthesis acetyltransferase WcaF</fullName>
        <ecNumber>2.3.1.-</ecNumber>
    </recommendedName>
</protein>
<accession>P0ACD2</accession>
<accession>P71240</accession>
<accession>P76383</accession>
<name>WCAF_ECOLI</name>
<feature type="chain" id="PRO_0000068736" description="Putative colanic acid biosynthesis acetyltransferase WcaF">
    <location>
        <begin position="1"/>
        <end position="182"/>
    </location>
</feature>
<feature type="sequence conflict" description="In Ref. 2; AAC77841." evidence="1" ref="2">
    <original>F</original>
    <variation>L</variation>
    <location>
        <position position="50"/>
    </location>
</feature>
<sequence>MQDLSGFSVPKGFRGGNAIKVQLWWAVQATIFAWSPQVLYRWRAFLLRLFGAKIGKNVVIRPSVKITYPWKLTLGDYAWVGDDVNLYTLGEITIGAHSVISQKSYLCTGSHDHASQHFTINATPIVIGEKCWLATDVFVAPGVTIGDGTVVGARSSVFKSLPANVVCRGNPAVVIRERVETE</sequence>
<dbReference type="EC" id="2.3.1.-"/>
<dbReference type="EMBL" id="U38473">
    <property type="protein sequence ID" value="AAC77841.1"/>
    <property type="molecule type" value="Genomic_DNA"/>
</dbReference>
<dbReference type="EMBL" id="U00096">
    <property type="protein sequence ID" value="AAC75115.1"/>
    <property type="molecule type" value="Genomic_DNA"/>
</dbReference>
<dbReference type="EMBL" id="AP009048">
    <property type="protein sequence ID" value="BAA15910.1"/>
    <property type="molecule type" value="Genomic_DNA"/>
</dbReference>
<dbReference type="PIR" id="E64971">
    <property type="entry name" value="E64971"/>
</dbReference>
<dbReference type="RefSeq" id="NP_416558.1">
    <property type="nucleotide sequence ID" value="NC_000913.3"/>
</dbReference>
<dbReference type="RefSeq" id="WP_001153547.1">
    <property type="nucleotide sequence ID" value="NZ_STEB01000002.1"/>
</dbReference>
<dbReference type="SMR" id="P0ACD2"/>
<dbReference type="BioGRID" id="4259689">
    <property type="interactions" value="201"/>
</dbReference>
<dbReference type="FunCoup" id="P0ACD2">
    <property type="interactions" value="52"/>
</dbReference>
<dbReference type="IntAct" id="P0ACD2">
    <property type="interactions" value="1"/>
</dbReference>
<dbReference type="STRING" id="511145.b2054"/>
<dbReference type="PaxDb" id="511145-b2054"/>
<dbReference type="EnsemblBacteria" id="AAC75115">
    <property type="protein sequence ID" value="AAC75115"/>
    <property type="gene ID" value="b2054"/>
</dbReference>
<dbReference type="GeneID" id="93775137"/>
<dbReference type="GeneID" id="946578"/>
<dbReference type="KEGG" id="ecj:JW2039"/>
<dbReference type="KEGG" id="eco:b2054"/>
<dbReference type="KEGG" id="ecoc:C3026_11560"/>
<dbReference type="PATRIC" id="fig|1411691.4.peg.197"/>
<dbReference type="EchoBASE" id="EB3344"/>
<dbReference type="eggNOG" id="COG0110">
    <property type="taxonomic scope" value="Bacteria"/>
</dbReference>
<dbReference type="HOGENOM" id="CLU_051638_7_2_6"/>
<dbReference type="InParanoid" id="P0ACD2"/>
<dbReference type="OMA" id="IWAPWNL"/>
<dbReference type="OrthoDB" id="9815592at2"/>
<dbReference type="PhylomeDB" id="P0ACD2"/>
<dbReference type="BioCyc" id="EcoCyc:G7099-MONOMER"/>
<dbReference type="BioCyc" id="MetaCyc:G7099-MONOMER"/>
<dbReference type="UniPathway" id="UPA00936"/>
<dbReference type="PRO" id="PR:P0ACD2"/>
<dbReference type="Proteomes" id="UP000000625">
    <property type="component" value="Chromosome"/>
</dbReference>
<dbReference type="GO" id="GO:0016413">
    <property type="term" value="F:O-acetyltransferase activity"/>
    <property type="evidence" value="ECO:0000314"/>
    <property type="project" value="EcoCyc"/>
</dbReference>
<dbReference type="GO" id="GO:0008374">
    <property type="term" value="F:O-acyltransferase activity"/>
    <property type="evidence" value="ECO:0000318"/>
    <property type="project" value="GO_Central"/>
</dbReference>
<dbReference type="GO" id="GO:0009242">
    <property type="term" value="P:colanic acid biosynthetic process"/>
    <property type="evidence" value="ECO:0000315"/>
    <property type="project" value="EcoCyc"/>
</dbReference>
<dbReference type="GO" id="GO:0009103">
    <property type="term" value="P:lipopolysaccharide biosynthetic process"/>
    <property type="evidence" value="ECO:0007669"/>
    <property type="project" value="UniProtKB-KW"/>
</dbReference>
<dbReference type="GO" id="GO:0044010">
    <property type="term" value="P:single-species biofilm formation"/>
    <property type="evidence" value="ECO:0000315"/>
    <property type="project" value="EcoCyc"/>
</dbReference>
<dbReference type="GO" id="GO:0045228">
    <property type="term" value="P:slime layer polysaccharide biosynthetic process"/>
    <property type="evidence" value="ECO:0007669"/>
    <property type="project" value="UniProtKB-UniPathway"/>
</dbReference>
<dbReference type="CDD" id="cd05825">
    <property type="entry name" value="LbH_wcaF_like"/>
    <property type="match status" value="1"/>
</dbReference>
<dbReference type="Gene3D" id="2.160.10.10">
    <property type="entry name" value="Hexapeptide repeat proteins"/>
    <property type="match status" value="1"/>
</dbReference>
<dbReference type="InterPro" id="IPR024005">
    <property type="entry name" value="Colanic_acid_synth_WcaF"/>
</dbReference>
<dbReference type="InterPro" id="IPR001451">
    <property type="entry name" value="Hexapep"/>
</dbReference>
<dbReference type="InterPro" id="IPR018357">
    <property type="entry name" value="Hexapep_transf_CS"/>
</dbReference>
<dbReference type="InterPro" id="IPR051159">
    <property type="entry name" value="Hexapeptide_acetyltransf"/>
</dbReference>
<dbReference type="InterPro" id="IPR011004">
    <property type="entry name" value="Trimer_LpxA-like_sf"/>
</dbReference>
<dbReference type="NCBIfam" id="NF007797">
    <property type="entry name" value="PRK10502.1"/>
    <property type="match status" value="1"/>
</dbReference>
<dbReference type="NCBIfam" id="TIGR04008">
    <property type="entry name" value="WcaF"/>
    <property type="match status" value="1"/>
</dbReference>
<dbReference type="PANTHER" id="PTHR23416:SF23">
    <property type="entry name" value="ACETYLTRANSFERASE C18B11.09C-RELATED"/>
    <property type="match status" value="1"/>
</dbReference>
<dbReference type="PANTHER" id="PTHR23416">
    <property type="entry name" value="SIALIC ACID SYNTHASE-RELATED"/>
    <property type="match status" value="1"/>
</dbReference>
<dbReference type="Pfam" id="PF00132">
    <property type="entry name" value="Hexapep"/>
    <property type="match status" value="1"/>
</dbReference>
<dbReference type="SUPFAM" id="SSF51161">
    <property type="entry name" value="Trimeric LpxA-like enzymes"/>
    <property type="match status" value="1"/>
</dbReference>
<dbReference type="PROSITE" id="PS00101">
    <property type="entry name" value="HEXAPEP_TRANSFERASES"/>
    <property type="match status" value="1"/>
</dbReference>
<reference key="1">
    <citation type="journal article" date="1996" name="J. Bacteriol.">
        <title>Organization of the Escherichia coli K-12 gene cluster responsible for production of the extracellular polysaccharide colanic acid.</title>
        <authorList>
            <person name="Stevenson G."/>
            <person name="Andrianopoulos K."/>
            <person name="Hobbs M."/>
            <person name="Reeves P.R."/>
        </authorList>
    </citation>
    <scope>NUCLEOTIDE SEQUENCE [GENOMIC DNA]</scope>
    <source>
        <strain>K12</strain>
    </source>
</reference>
<reference key="2">
    <citation type="submission" date="1998-04" db="EMBL/GenBank/DDBJ databases">
        <authorList>
            <person name="Reeves P.R."/>
        </authorList>
    </citation>
    <scope>SEQUENCE REVISION TO N-TERMINUS</scope>
    <source>
        <strain>K12</strain>
    </source>
</reference>
<reference key="3">
    <citation type="journal article" date="1996" name="DNA Res.">
        <title>A 460-kb DNA sequence of the Escherichia coli K-12 genome corresponding to the 40.1-50.0 min region on the linkage map.</title>
        <authorList>
            <person name="Itoh T."/>
            <person name="Aiba H."/>
            <person name="Baba T."/>
            <person name="Fujita K."/>
            <person name="Hayashi K."/>
            <person name="Inada T."/>
            <person name="Isono K."/>
            <person name="Kasai H."/>
            <person name="Kimura S."/>
            <person name="Kitakawa M."/>
            <person name="Kitagawa M."/>
            <person name="Makino K."/>
            <person name="Miki T."/>
            <person name="Mizobuchi K."/>
            <person name="Mori H."/>
            <person name="Mori T."/>
            <person name="Motomura K."/>
            <person name="Nakade S."/>
            <person name="Nakamura Y."/>
            <person name="Nashimoto H."/>
            <person name="Nishio Y."/>
            <person name="Oshima T."/>
            <person name="Saito N."/>
            <person name="Sampei G."/>
            <person name="Seki Y."/>
            <person name="Sivasundaram S."/>
            <person name="Tagami H."/>
            <person name="Takeda J."/>
            <person name="Takemoto K."/>
            <person name="Wada C."/>
            <person name="Yamamoto Y."/>
            <person name="Horiuchi T."/>
        </authorList>
    </citation>
    <scope>NUCLEOTIDE SEQUENCE [LARGE SCALE GENOMIC DNA]</scope>
    <source>
        <strain>K12 / W3110 / ATCC 27325 / DSM 5911</strain>
    </source>
</reference>
<reference key="4">
    <citation type="journal article" date="1997" name="Science">
        <title>The complete genome sequence of Escherichia coli K-12.</title>
        <authorList>
            <person name="Blattner F.R."/>
            <person name="Plunkett G. III"/>
            <person name="Bloch C.A."/>
            <person name="Perna N.T."/>
            <person name="Burland V."/>
            <person name="Riley M."/>
            <person name="Collado-Vides J."/>
            <person name="Glasner J.D."/>
            <person name="Rode C.K."/>
            <person name="Mayhew G.F."/>
            <person name="Gregor J."/>
            <person name="Davis N.W."/>
            <person name="Kirkpatrick H.A."/>
            <person name="Goeden M.A."/>
            <person name="Rose D.J."/>
            <person name="Mau B."/>
            <person name="Shao Y."/>
        </authorList>
    </citation>
    <scope>NUCLEOTIDE SEQUENCE [LARGE SCALE GENOMIC DNA]</scope>
    <source>
        <strain>K12 / MG1655 / ATCC 47076</strain>
    </source>
</reference>
<reference key="5">
    <citation type="journal article" date="2006" name="Mol. Syst. Biol.">
        <title>Highly accurate genome sequences of Escherichia coli K-12 strains MG1655 and W3110.</title>
        <authorList>
            <person name="Hayashi K."/>
            <person name="Morooka N."/>
            <person name="Yamamoto Y."/>
            <person name="Fujita K."/>
            <person name="Isono K."/>
            <person name="Choi S."/>
            <person name="Ohtsubo E."/>
            <person name="Baba T."/>
            <person name="Wanner B.L."/>
            <person name="Mori H."/>
            <person name="Horiuchi T."/>
        </authorList>
    </citation>
    <scope>NUCLEOTIDE SEQUENCE [LARGE SCALE GENOMIC DNA]</scope>
    <source>
        <strain>K12 / W3110 / ATCC 27325 / DSM 5911</strain>
    </source>
</reference>